<sequence length="339" mass="36954">MTQAQTATVQPDAIPVAAPASQRWRVADVVALFELPFNDLIFRAQQVHREHFDANAVQLSTLLSIKTGGCEEDCGYCSQSSHHDTGLKAEKLMDVDAVLDAARAAKANGASRFCMGAAWRNPKERHMPALTEMVRGVKELGLETCMTLGMLEDEQAQELANAGLDYYNHNLDTSPEFYGQVISTRTYQDRLDTLDRVRDAGINVCCGGIIGMGESRRERAGLISQLANLNPYPDSVPINNLVAIEGTPLEGTAPLDPFEFVRTIAVARITMPKAVVRLSAGREQLDDGLQAMCFLAGANSMFYGDQLLTTSNPQSQKDRALFERLGIRASDADAMQANA</sequence>
<keyword id="KW-0001">2Fe-2S</keyword>
<keyword id="KW-0004">4Fe-4S</keyword>
<keyword id="KW-0093">Biotin biosynthesis</keyword>
<keyword id="KW-0408">Iron</keyword>
<keyword id="KW-0411">Iron-sulfur</keyword>
<keyword id="KW-0479">Metal-binding</keyword>
<keyword id="KW-0949">S-adenosyl-L-methionine</keyword>
<keyword id="KW-0808">Transferase</keyword>
<protein>
    <recommendedName>
        <fullName evidence="1">Biotin synthase</fullName>
        <ecNumber evidence="1">2.8.1.6</ecNumber>
    </recommendedName>
</protein>
<gene>
    <name evidence="1" type="primary">bioB</name>
    <name type="ordered locus">Bamb_2983</name>
</gene>
<reference key="1">
    <citation type="submission" date="2006-08" db="EMBL/GenBank/DDBJ databases">
        <title>Complete sequence of chromosome 1 of Burkholderia cepacia AMMD.</title>
        <authorList>
            <person name="Copeland A."/>
            <person name="Lucas S."/>
            <person name="Lapidus A."/>
            <person name="Barry K."/>
            <person name="Detter J.C."/>
            <person name="Glavina del Rio T."/>
            <person name="Hammon N."/>
            <person name="Israni S."/>
            <person name="Pitluck S."/>
            <person name="Bruce D."/>
            <person name="Chain P."/>
            <person name="Malfatti S."/>
            <person name="Shin M."/>
            <person name="Vergez L."/>
            <person name="Schmutz J."/>
            <person name="Larimer F."/>
            <person name="Land M."/>
            <person name="Hauser L."/>
            <person name="Kyrpides N."/>
            <person name="Kim E."/>
            <person name="Parke J."/>
            <person name="Coenye T."/>
            <person name="Konstantinidis K."/>
            <person name="Ramette A."/>
            <person name="Tiedje J."/>
            <person name="Richardson P."/>
        </authorList>
    </citation>
    <scope>NUCLEOTIDE SEQUENCE [LARGE SCALE GENOMIC DNA]</scope>
    <source>
        <strain>ATCC BAA-244 / DSM 16087 / CCUG 44356 / LMG 19182 / AMMD</strain>
    </source>
</reference>
<accession>Q0BBD4</accession>
<dbReference type="EC" id="2.8.1.6" evidence="1"/>
<dbReference type="EMBL" id="CP000440">
    <property type="protein sequence ID" value="ABI88539.1"/>
    <property type="molecule type" value="Genomic_DNA"/>
</dbReference>
<dbReference type="RefSeq" id="WP_006750874.1">
    <property type="nucleotide sequence ID" value="NZ_CP009798.1"/>
</dbReference>
<dbReference type="SMR" id="Q0BBD4"/>
<dbReference type="GeneID" id="93084815"/>
<dbReference type="KEGG" id="bam:Bamb_2983"/>
<dbReference type="PATRIC" id="fig|339670.21.peg.1891"/>
<dbReference type="eggNOG" id="COG0502">
    <property type="taxonomic scope" value="Bacteria"/>
</dbReference>
<dbReference type="UniPathway" id="UPA00078">
    <property type="reaction ID" value="UER00162"/>
</dbReference>
<dbReference type="Proteomes" id="UP000000662">
    <property type="component" value="Chromosome 1"/>
</dbReference>
<dbReference type="GO" id="GO:0051537">
    <property type="term" value="F:2 iron, 2 sulfur cluster binding"/>
    <property type="evidence" value="ECO:0007669"/>
    <property type="project" value="UniProtKB-KW"/>
</dbReference>
<dbReference type="GO" id="GO:0051539">
    <property type="term" value="F:4 iron, 4 sulfur cluster binding"/>
    <property type="evidence" value="ECO:0007669"/>
    <property type="project" value="UniProtKB-KW"/>
</dbReference>
<dbReference type="GO" id="GO:0004076">
    <property type="term" value="F:biotin synthase activity"/>
    <property type="evidence" value="ECO:0007669"/>
    <property type="project" value="UniProtKB-UniRule"/>
</dbReference>
<dbReference type="GO" id="GO:0005506">
    <property type="term" value="F:iron ion binding"/>
    <property type="evidence" value="ECO:0007669"/>
    <property type="project" value="UniProtKB-UniRule"/>
</dbReference>
<dbReference type="GO" id="GO:0009102">
    <property type="term" value="P:biotin biosynthetic process"/>
    <property type="evidence" value="ECO:0007669"/>
    <property type="project" value="UniProtKB-UniRule"/>
</dbReference>
<dbReference type="CDD" id="cd01335">
    <property type="entry name" value="Radical_SAM"/>
    <property type="match status" value="1"/>
</dbReference>
<dbReference type="FunFam" id="3.20.20.70:FF:000011">
    <property type="entry name" value="Biotin synthase"/>
    <property type="match status" value="1"/>
</dbReference>
<dbReference type="Gene3D" id="3.20.20.70">
    <property type="entry name" value="Aldolase class I"/>
    <property type="match status" value="1"/>
</dbReference>
<dbReference type="HAMAP" id="MF_01694">
    <property type="entry name" value="BioB"/>
    <property type="match status" value="1"/>
</dbReference>
<dbReference type="InterPro" id="IPR013785">
    <property type="entry name" value="Aldolase_TIM"/>
</dbReference>
<dbReference type="InterPro" id="IPR010722">
    <property type="entry name" value="BATS_dom"/>
</dbReference>
<dbReference type="InterPro" id="IPR002684">
    <property type="entry name" value="Biotin_synth/BioAB"/>
</dbReference>
<dbReference type="InterPro" id="IPR024177">
    <property type="entry name" value="Biotin_synthase"/>
</dbReference>
<dbReference type="InterPro" id="IPR006638">
    <property type="entry name" value="Elp3/MiaA/NifB-like_rSAM"/>
</dbReference>
<dbReference type="InterPro" id="IPR007197">
    <property type="entry name" value="rSAM"/>
</dbReference>
<dbReference type="NCBIfam" id="TIGR00433">
    <property type="entry name" value="bioB"/>
    <property type="match status" value="1"/>
</dbReference>
<dbReference type="PANTHER" id="PTHR22976">
    <property type="entry name" value="BIOTIN SYNTHASE"/>
    <property type="match status" value="1"/>
</dbReference>
<dbReference type="PANTHER" id="PTHR22976:SF2">
    <property type="entry name" value="BIOTIN SYNTHASE, MITOCHONDRIAL"/>
    <property type="match status" value="1"/>
</dbReference>
<dbReference type="Pfam" id="PF06968">
    <property type="entry name" value="BATS"/>
    <property type="match status" value="1"/>
</dbReference>
<dbReference type="Pfam" id="PF04055">
    <property type="entry name" value="Radical_SAM"/>
    <property type="match status" value="1"/>
</dbReference>
<dbReference type="PIRSF" id="PIRSF001619">
    <property type="entry name" value="Biotin_synth"/>
    <property type="match status" value="1"/>
</dbReference>
<dbReference type="SFLD" id="SFLDG01060">
    <property type="entry name" value="BATS_domain_containing"/>
    <property type="match status" value="1"/>
</dbReference>
<dbReference type="SFLD" id="SFLDF00272">
    <property type="entry name" value="biotin_synthase"/>
    <property type="match status" value="1"/>
</dbReference>
<dbReference type="SMART" id="SM00876">
    <property type="entry name" value="BATS"/>
    <property type="match status" value="1"/>
</dbReference>
<dbReference type="SMART" id="SM00729">
    <property type="entry name" value="Elp3"/>
    <property type="match status" value="1"/>
</dbReference>
<dbReference type="SUPFAM" id="SSF102114">
    <property type="entry name" value="Radical SAM enzymes"/>
    <property type="match status" value="1"/>
</dbReference>
<dbReference type="PROSITE" id="PS51918">
    <property type="entry name" value="RADICAL_SAM"/>
    <property type="match status" value="1"/>
</dbReference>
<proteinExistence type="inferred from homology"/>
<organism>
    <name type="scientific">Burkholderia ambifaria (strain ATCC BAA-244 / DSM 16087 / CCUG 44356 / LMG 19182 / AMMD)</name>
    <name type="common">Burkholderia cepacia (strain AMMD)</name>
    <dbReference type="NCBI Taxonomy" id="339670"/>
    <lineage>
        <taxon>Bacteria</taxon>
        <taxon>Pseudomonadati</taxon>
        <taxon>Pseudomonadota</taxon>
        <taxon>Betaproteobacteria</taxon>
        <taxon>Burkholderiales</taxon>
        <taxon>Burkholderiaceae</taxon>
        <taxon>Burkholderia</taxon>
        <taxon>Burkholderia cepacia complex</taxon>
    </lineage>
</organism>
<name>BIOB_BURCM</name>
<feature type="chain" id="PRO_0000381263" description="Biotin synthase">
    <location>
        <begin position="1"/>
        <end position="339"/>
    </location>
</feature>
<feature type="domain" description="Radical SAM core" evidence="2">
    <location>
        <begin position="55"/>
        <end position="282"/>
    </location>
</feature>
<feature type="binding site" evidence="1">
    <location>
        <position position="70"/>
    </location>
    <ligand>
        <name>[4Fe-4S] cluster</name>
        <dbReference type="ChEBI" id="CHEBI:49883"/>
        <note>4Fe-4S-S-AdoMet</note>
    </ligand>
</feature>
<feature type="binding site" evidence="1">
    <location>
        <position position="74"/>
    </location>
    <ligand>
        <name>[4Fe-4S] cluster</name>
        <dbReference type="ChEBI" id="CHEBI:49883"/>
        <note>4Fe-4S-S-AdoMet</note>
    </ligand>
</feature>
<feature type="binding site" evidence="1">
    <location>
        <position position="77"/>
    </location>
    <ligand>
        <name>[4Fe-4S] cluster</name>
        <dbReference type="ChEBI" id="CHEBI:49883"/>
        <note>4Fe-4S-S-AdoMet</note>
    </ligand>
</feature>
<feature type="binding site" evidence="1">
    <location>
        <position position="114"/>
    </location>
    <ligand>
        <name>[2Fe-2S] cluster</name>
        <dbReference type="ChEBI" id="CHEBI:190135"/>
    </ligand>
</feature>
<feature type="binding site" evidence="1">
    <location>
        <position position="145"/>
    </location>
    <ligand>
        <name>[2Fe-2S] cluster</name>
        <dbReference type="ChEBI" id="CHEBI:190135"/>
    </ligand>
</feature>
<feature type="binding site" evidence="1">
    <location>
        <position position="205"/>
    </location>
    <ligand>
        <name>[2Fe-2S] cluster</name>
        <dbReference type="ChEBI" id="CHEBI:190135"/>
    </ligand>
</feature>
<feature type="binding site" evidence="1">
    <location>
        <position position="277"/>
    </location>
    <ligand>
        <name>[2Fe-2S] cluster</name>
        <dbReference type="ChEBI" id="CHEBI:190135"/>
    </ligand>
</feature>
<comment type="function">
    <text evidence="1">Catalyzes the conversion of dethiobiotin (DTB) to biotin by the insertion of a sulfur atom into dethiobiotin via a radical-based mechanism.</text>
</comment>
<comment type="catalytic activity">
    <reaction evidence="1">
        <text>(4R,5S)-dethiobiotin + (sulfur carrier)-SH + 2 reduced [2Fe-2S]-[ferredoxin] + 2 S-adenosyl-L-methionine = (sulfur carrier)-H + biotin + 2 5'-deoxyadenosine + 2 L-methionine + 2 oxidized [2Fe-2S]-[ferredoxin]</text>
        <dbReference type="Rhea" id="RHEA:22060"/>
        <dbReference type="Rhea" id="RHEA-COMP:10000"/>
        <dbReference type="Rhea" id="RHEA-COMP:10001"/>
        <dbReference type="Rhea" id="RHEA-COMP:14737"/>
        <dbReference type="Rhea" id="RHEA-COMP:14739"/>
        <dbReference type="ChEBI" id="CHEBI:17319"/>
        <dbReference type="ChEBI" id="CHEBI:29917"/>
        <dbReference type="ChEBI" id="CHEBI:33737"/>
        <dbReference type="ChEBI" id="CHEBI:33738"/>
        <dbReference type="ChEBI" id="CHEBI:57586"/>
        <dbReference type="ChEBI" id="CHEBI:57844"/>
        <dbReference type="ChEBI" id="CHEBI:59789"/>
        <dbReference type="ChEBI" id="CHEBI:64428"/>
        <dbReference type="ChEBI" id="CHEBI:149473"/>
        <dbReference type="EC" id="2.8.1.6"/>
    </reaction>
</comment>
<comment type="cofactor">
    <cofactor evidence="1">
        <name>[4Fe-4S] cluster</name>
        <dbReference type="ChEBI" id="CHEBI:49883"/>
    </cofactor>
    <text evidence="1">Binds 1 [4Fe-4S] cluster. The cluster is coordinated with 3 cysteines and an exchangeable S-adenosyl-L-methionine.</text>
</comment>
<comment type="cofactor">
    <cofactor evidence="1">
        <name>[2Fe-2S] cluster</name>
        <dbReference type="ChEBI" id="CHEBI:190135"/>
    </cofactor>
    <text evidence="1">Binds 1 [2Fe-2S] cluster. The cluster is coordinated with 3 cysteines and 1 arginine.</text>
</comment>
<comment type="pathway">
    <text evidence="1">Cofactor biosynthesis; biotin biosynthesis; biotin from 7,8-diaminononanoate: step 2/2.</text>
</comment>
<comment type="subunit">
    <text evidence="1">Homodimer.</text>
</comment>
<comment type="similarity">
    <text evidence="1">Belongs to the radical SAM superfamily. Biotin synthase family.</text>
</comment>
<evidence type="ECO:0000255" key="1">
    <source>
        <dbReference type="HAMAP-Rule" id="MF_01694"/>
    </source>
</evidence>
<evidence type="ECO:0000255" key="2">
    <source>
        <dbReference type="PROSITE-ProRule" id="PRU01266"/>
    </source>
</evidence>